<proteinExistence type="evidence at protein level"/>
<protein>
    <recommendedName>
        <fullName>Inner kinetochore subunit fta7</fullName>
    </recommendedName>
    <alternativeName>
        <fullName>CENP-Q homolog</fullName>
    </alternativeName>
    <alternativeName>
        <fullName>Constitutive centromere-associated network protein fta7</fullName>
    </alternativeName>
    <alternativeName>
        <fullName>Sim4 complex subunit fta7</fullName>
    </alternativeName>
    <alternativeName>
        <fullName>Sim4-mal2-associated protein 7</fullName>
    </alternativeName>
</protein>
<feature type="chain" id="PRO_0000290642" description="Inner kinetochore subunit fta7">
    <location>
        <begin position="1"/>
        <end position="244"/>
    </location>
</feature>
<keyword id="KW-0131">Cell cycle</keyword>
<keyword id="KW-0132">Cell division</keyword>
<keyword id="KW-0137">Centromere</keyword>
<keyword id="KW-0158">Chromosome</keyword>
<keyword id="KW-0159">Chromosome partition</keyword>
<keyword id="KW-0963">Cytoplasm</keyword>
<keyword id="KW-0206">Cytoskeleton</keyword>
<keyword id="KW-0995">Kinetochore</keyword>
<keyword id="KW-0493">Microtubule</keyword>
<keyword id="KW-0498">Mitosis</keyword>
<keyword id="KW-0539">Nucleus</keyword>
<keyword id="KW-1185">Reference proteome</keyword>
<organism>
    <name type="scientific">Schizosaccharomyces pombe (strain 972 / ATCC 24843)</name>
    <name type="common">Fission yeast</name>
    <dbReference type="NCBI Taxonomy" id="284812"/>
    <lineage>
        <taxon>Eukaryota</taxon>
        <taxon>Fungi</taxon>
        <taxon>Dikarya</taxon>
        <taxon>Ascomycota</taxon>
        <taxon>Taphrinomycotina</taxon>
        <taxon>Schizosaccharomycetes</taxon>
        <taxon>Schizosaccharomycetales</taxon>
        <taxon>Schizosaccharomycetaceae</taxon>
        <taxon>Schizosaccharomyces</taxon>
    </lineage>
</organism>
<name>CENPQ_SCHPO</name>
<evidence type="ECO:0000250" key="1">
    <source>
        <dbReference type="UniProtKB" id="P53298"/>
    </source>
</evidence>
<evidence type="ECO:0000269" key="2">
    <source>
    </source>
</evidence>
<evidence type="ECO:0000305" key="3"/>
<evidence type="ECO:0000305" key="4">
    <source>
    </source>
</evidence>
<comment type="function">
    <text evidence="2">Component of the kinetochore, a multiprotein complex that assembles on centromeric DNA and attaches chromosomes to spindle microtubules, mediating chromosome segregation and sister chromatid segregation during meiosis and mitosis. Component of the inner kinetochore COMA complex, which connects centromere-associated proteins and the outer kinetochore. COMA interacts with other inner kinetochore proteins to form the inner kinetochore constitutive centromere-associated network (CCAN), which serves as a structural platform for outer kinetochore assembly.</text>
</comment>
<comment type="subunit">
    <text evidence="1 2 4">Component of the heterotetrameric kinetochore subcomplex COMA, which consists of fta2, fta7, mal2 and mis17 (By similarity). The COMA subcomplex is part of a larger constitutive centromere-associated network (CCAN) (also known as central kinetochore Sim4 complex in fission yeast), which is composed of at least cnl2, cnp3, cnp20, fta1, fta2, fta3, fta4, fta6, fta7, mal2, mhf1, mhf2, mis6, mis15, mis17, sim4 and wip1 (Probable) (PubMed:16079914).</text>
</comment>
<comment type="subcellular location">
    <subcellularLocation>
        <location>Nucleus</location>
    </subcellularLocation>
    <subcellularLocation>
        <location>Chromosome</location>
        <location>Centromere</location>
        <location>Kinetochore</location>
    </subcellularLocation>
    <subcellularLocation>
        <location>Cytoplasm</location>
        <location>Cytoskeleton</location>
        <location>Microtubule organizing center</location>
        <location>Spindle pole body</location>
    </subcellularLocation>
</comment>
<comment type="similarity">
    <text evidence="3">Belongs to the CENP-Q/OKP1 family.</text>
</comment>
<sequence length="244" mass="28843">MEMKRRVRAVRRDQIQKRWRPLEDKQRQEIIIIFRTCSRLVLNTIKSETRKSLAEEWFMNILLKIEAPLRNLPVPRKRKESILFSQLLSSNMQLEQQLYSDLDHINVLQQELKVETARLENEQKSYEEMKQNMAINNSRLADLKSKLHPYLKKGLKISHDNFSDSNDFSFQKKLNTEDSNTSKTSTLDMYKEKLKPFTKTMQIHANKTVQLSQTIQKATLLLQRLNNTKNIGLNKSSKLKIKNI</sequence>
<reference key="1">
    <citation type="journal article" date="2002" name="Nature">
        <title>The genome sequence of Schizosaccharomyces pombe.</title>
        <authorList>
            <person name="Wood V."/>
            <person name="Gwilliam R."/>
            <person name="Rajandream M.A."/>
            <person name="Lyne M.H."/>
            <person name="Lyne R."/>
            <person name="Stewart A."/>
            <person name="Sgouros J.G."/>
            <person name="Peat N."/>
            <person name="Hayles J."/>
            <person name="Baker S.G."/>
            <person name="Basham D."/>
            <person name="Bowman S."/>
            <person name="Brooks K."/>
            <person name="Brown D."/>
            <person name="Brown S."/>
            <person name="Chillingworth T."/>
            <person name="Churcher C.M."/>
            <person name="Collins M."/>
            <person name="Connor R."/>
            <person name="Cronin A."/>
            <person name="Davis P."/>
            <person name="Feltwell T."/>
            <person name="Fraser A."/>
            <person name="Gentles S."/>
            <person name="Goble A."/>
            <person name="Hamlin N."/>
            <person name="Harris D.E."/>
            <person name="Hidalgo J."/>
            <person name="Hodgson G."/>
            <person name="Holroyd S."/>
            <person name="Hornsby T."/>
            <person name="Howarth S."/>
            <person name="Huckle E.J."/>
            <person name="Hunt S."/>
            <person name="Jagels K."/>
            <person name="James K.D."/>
            <person name="Jones L."/>
            <person name="Jones M."/>
            <person name="Leather S."/>
            <person name="McDonald S."/>
            <person name="McLean J."/>
            <person name="Mooney P."/>
            <person name="Moule S."/>
            <person name="Mungall K.L."/>
            <person name="Murphy L.D."/>
            <person name="Niblett D."/>
            <person name="Odell C."/>
            <person name="Oliver K."/>
            <person name="O'Neil S."/>
            <person name="Pearson D."/>
            <person name="Quail M.A."/>
            <person name="Rabbinowitsch E."/>
            <person name="Rutherford K.M."/>
            <person name="Rutter S."/>
            <person name="Saunders D."/>
            <person name="Seeger K."/>
            <person name="Sharp S."/>
            <person name="Skelton J."/>
            <person name="Simmonds M.N."/>
            <person name="Squares R."/>
            <person name="Squares S."/>
            <person name="Stevens K."/>
            <person name="Taylor K."/>
            <person name="Taylor R.G."/>
            <person name="Tivey A."/>
            <person name="Walsh S.V."/>
            <person name="Warren T."/>
            <person name="Whitehead S."/>
            <person name="Woodward J.R."/>
            <person name="Volckaert G."/>
            <person name="Aert R."/>
            <person name="Robben J."/>
            <person name="Grymonprez B."/>
            <person name="Weltjens I."/>
            <person name="Vanstreels E."/>
            <person name="Rieger M."/>
            <person name="Schaefer M."/>
            <person name="Mueller-Auer S."/>
            <person name="Gabel C."/>
            <person name="Fuchs M."/>
            <person name="Duesterhoeft A."/>
            <person name="Fritzc C."/>
            <person name="Holzer E."/>
            <person name="Moestl D."/>
            <person name="Hilbert H."/>
            <person name="Borzym K."/>
            <person name="Langer I."/>
            <person name="Beck A."/>
            <person name="Lehrach H."/>
            <person name="Reinhardt R."/>
            <person name="Pohl T.M."/>
            <person name="Eger P."/>
            <person name="Zimmermann W."/>
            <person name="Wedler H."/>
            <person name="Wambutt R."/>
            <person name="Purnelle B."/>
            <person name="Goffeau A."/>
            <person name="Cadieu E."/>
            <person name="Dreano S."/>
            <person name="Gloux S."/>
            <person name="Lelaure V."/>
            <person name="Mottier S."/>
            <person name="Galibert F."/>
            <person name="Aves S.J."/>
            <person name="Xiang Z."/>
            <person name="Hunt C."/>
            <person name="Moore K."/>
            <person name="Hurst S.M."/>
            <person name="Lucas M."/>
            <person name="Rochet M."/>
            <person name="Gaillardin C."/>
            <person name="Tallada V.A."/>
            <person name="Garzon A."/>
            <person name="Thode G."/>
            <person name="Daga R.R."/>
            <person name="Cruzado L."/>
            <person name="Jimenez J."/>
            <person name="Sanchez M."/>
            <person name="del Rey F."/>
            <person name="Benito J."/>
            <person name="Dominguez A."/>
            <person name="Revuelta J.L."/>
            <person name="Moreno S."/>
            <person name="Armstrong J."/>
            <person name="Forsburg S.L."/>
            <person name="Cerutti L."/>
            <person name="Lowe T."/>
            <person name="McCombie W.R."/>
            <person name="Paulsen I."/>
            <person name="Potashkin J."/>
            <person name="Shpakovski G.V."/>
            <person name="Ussery D."/>
            <person name="Barrell B.G."/>
            <person name="Nurse P."/>
        </authorList>
    </citation>
    <scope>NUCLEOTIDE SEQUENCE [LARGE SCALE GENOMIC DNA]</scope>
    <source>
        <strain>972 / ATCC 24843</strain>
    </source>
</reference>
<reference key="2">
    <citation type="journal article" date="2005" name="EMBO J.">
        <title>Molecular analysis of kinetochore architecture in fission yeast.</title>
        <authorList>
            <person name="Liu X."/>
            <person name="McLeod I."/>
            <person name="Anderson S."/>
            <person name="Yates J.R. III"/>
            <person name="He X."/>
        </authorList>
    </citation>
    <scope>FUNCTION</scope>
    <scope>IDENTIFICATION IN THE SIM4 COMPLEX</scope>
    <scope>SUBCELLULAR LOCATION</scope>
</reference>
<reference key="3">
    <citation type="journal article" date="2006" name="Nat. Biotechnol.">
        <title>ORFeome cloning and global analysis of protein localization in the fission yeast Schizosaccharomyces pombe.</title>
        <authorList>
            <person name="Matsuyama A."/>
            <person name="Arai R."/>
            <person name="Yashiroda Y."/>
            <person name="Shirai A."/>
            <person name="Kamata A."/>
            <person name="Sekido S."/>
            <person name="Kobayashi Y."/>
            <person name="Hashimoto A."/>
            <person name="Hamamoto M."/>
            <person name="Hiraoka Y."/>
            <person name="Horinouchi S."/>
            <person name="Yoshida M."/>
        </authorList>
    </citation>
    <scope>SUBCELLULAR LOCATION [LARGE SCALE ANALYSIS]</scope>
</reference>
<reference key="4">
    <citation type="journal article" date="2012" name="Nat. Cell Biol.">
        <title>CENP-T proteins are conserved centromere receptors of the Ndc80 complex.</title>
        <authorList>
            <person name="Schleiffer A."/>
            <person name="Maier M."/>
            <person name="Litos G."/>
            <person name="Lampert F."/>
            <person name="Hornung P."/>
            <person name="Mechtler K."/>
            <person name="Westermann S."/>
        </authorList>
    </citation>
    <scope>IDENTIFICATION IN CCAN</scope>
</reference>
<gene>
    <name type="primary">fta7</name>
    <name type="synonym">sma7</name>
    <name type="ORF">SPCC1235.07</name>
</gene>
<dbReference type="EMBL" id="CU329672">
    <property type="protein sequence ID" value="CAA21111.1"/>
    <property type="molecule type" value="Genomic_DNA"/>
</dbReference>
<dbReference type="PIR" id="T40881">
    <property type="entry name" value="T40881"/>
</dbReference>
<dbReference type="RefSeq" id="NP_587733.1">
    <property type="nucleotide sequence ID" value="NM_001022728.2"/>
</dbReference>
<dbReference type="SMR" id="O74844"/>
<dbReference type="BioGRID" id="275687">
    <property type="interactions" value="6"/>
</dbReference>
<dbReference type="STRING" id="284812.O74844"/>
<dbReference type="PaxDb" id="4896-SPCC1235.07.1"/>
<dbReference type="EnsemblFungi" id="SPCC1235.07.1">
    <property type="protein sequence ID" value="SPCC1235.07.1:pep"/>
    <property type="gene ID" value="SPCC1235.07"/>
</dbReference>
<dbReference type="GeneID" id="2539115"/>
<dbReference type="KEGG" id="spo:2539115"/>
<dbReference type="PomBase" id="SPCC1235.07">
    <property type="gene designation" value="fta7"/>
</dbReference>
<dbReference type="VEuPathDB" id="FungiDB:SPCC1235.07"/>
<dbReference type="eggNOG" id="ENOG502SASA">
    <property type="taxonomic scope" value="Eukaryota"/>
</dbReference>
<dbReference type="HOGENOM" id="CLU_1166427_0_0_1"/>
<dbReference type="InParanoid" id="O74844"/>
<dbReference type="OMA" id="QHEEIMI"/>
<dbReference type="PhylomeDB" id="O74844"/>
<dbReference type="PRO" id="PR:O74844"/>
<dbReference type="Proteomes" id="UP000002485">
    <property type="component" value="Chromosome III"/>
</dbReference>
<dbReference type="GO" id="GO:0000779">
    <property type="term" value="C:condensed chromosome, centromeric region"/>
    <property type="evidence" value="ECO:0000314"/>
    <property type="project" value="PomBase"/>
</dbReference>
<dbReference type="GO" id="GO:0005737">
    <property type="term" value="C:cytoplasm"/>
    <property type="evidence" value="ECO:0007669"/>
    <property type="project" value="UniProtKB-KW"/>
</dbReference>
<dbReference type="GO" id="GO:0000939">
    <property type="term" value="C:inner kinetochore"/>
    <property type="evidence" value="ECO:0000314"/>
    <property type="project" value="PomBase"/>
</dbReference>
<dbReference type="GO" id="GO:0000776">
    <property type="term" value="C:kinetochore"/>
    <property type="evidence" value="ECO:0000314"/>
    <property type="project" value="PomBase"/>
</dbReference>
<dbReference type="GO" id="GO:0005874">
    <property type="term" value="C:microtubule"/>
    <property type="evidence" value="ECO:0007669"/>
    <property type="project" value="UniProtKB-KW"/>
</dbReference>
<dbReference type="GO" id="GO:0031511">
    <property type="term" value="C:Mis6-Sim4 complex"/>
    <property type="evidence" value="ECO:0000314"/>
    <property type="project" value="PomBase"/>
</dbReference>
<dbReference type="GO" id="GO:0005634">
    <property type="term" value="C:nucleus"/>
    <property type="evidence" value="ECO:0007005"/>
    <property type="project" value="PomBase"/>
</dbReference>
<dbReference type="GO" id="GO:0005816">
    <property type="term" value="C:spindle pole body"/>
    <property type="evidence" value="ECO:0007669"/>
    <property type="project" value="UniProtKB-SubCell"/>
</dbReference>
<dbReference type="GO" id="GO:0051301">
    <property type="term" value="P:cell division"/>
    <property type="evidence" value="ECO:0007669"/>
    <property type="project" value="UniProtKB-KW"/>
</dbReference>
<dbReference type="GO" id="GO:0000070">
    <property type="term" value="P:mitotic sister chromatid segregation"/>
    <property type="evidence" value="ECO:0000305"/>
    <property type="project" value="PomBase"/>
</dbReference>
<dbReference type="InterPro" id="IPR025212">
    <property type="entry name" value="CAD_CENP-Q"/>
</dbReference>
<dbReference type="PANTHER" id="PTHR31345">
    <property type="entry name" value="CENTROMERE PROTEIN Q"/>
    <property type="match status" value="1"/>
</dbReference>
<dbReference type="PANTHER" id="PTHR31345:SF3">
    <property type="entry name" value="CENTROMERE PROTEIN Q"/>
    <property type="match status" value="1"/>
</dbReference>
<dbReference type="Pfam" id="PF13094">
    <property type="entry name" value="CENP-Q"/>
    <property type="match status" value="1"/>
</dbReference>
<accession>O74844</accession>